<keyword id="KW-0067">ATP-binding</keyword>
<keyword id="KW-0418">Kinase</keyword>
<keyword id="KW-0460">Magnesium</keyword>
<keyword id="KW-0479">Metal-binding</keyword>
<keyword id="KW-0547">Nucleotide-binding</keyword>
<keyword id="KW-0784">Thiamine biosynthesis</keyword>
<keyword id="KW-0808">Transferase</keyword>
<accession>C3KZ28</accession>
<name>THIM2_CLOB6</name>
<organism>
    <name type="scientific">Clostridium botulinum (strain 657 / Type Ba4)</name>
    <dbReference type="NCBI Taxonomy" id="515621"/>
    <lineage>
        <taxon>Bacteria</taxon>
        <taxon>Bacillati</taxon>
        <taxon>Bacillota</taxon>
        <taxon>Clostridia</taxon>
        <taxon>Eubacteriales</taxon>
        <taxon>Clostridiaceae</taxon>
        <taxon>Clostridium</taxon>
    </lineage>
</organism>
<dbReference type="EC" id="2.7.1.50" evidence="1"/>
<dbReference type="EMBL" id="CP001083">
    <property type="protein sequence ID" value="ACQ54764.1"/>
    <property type="molecule type" value="Genomic_DNA"/>
</dbReference>
<dbReference type="SMR" id="C3KZ28"/>
<dbReference type="KEGG" id="cbi:CLJ_B2463"/>
<dbReference type="HOGENOM" id="CLU_019943_0_0_9"/>
<dbReference type="UniPathway" id="UPA00060">
    <property type="reaction ID" value="UER00139"/>
</dbReference>
<dbReference type="Proteomes" id="UP000002333">
    <property type="component" value="Chromosome"/>
</dbReference>
<dbReference type="GO" id="GO:0005524">
    <property type="term" value="F:ATP binding"/>
    <property type="evidence" value="ECO:0007669"/>
    <property type="project" value="UniProtKB-UniRule"/>
</dbReference>
<dbReference type="GO" id="GO:0004417">
    <property type="term" value="F:hydroxyethylthiazole kinase activity"/>
    <property type="evidence" value="ECO:0007669"/>
    <property type="project" value="UniProtKB-UniRule"/>
</dbReference>
<dbReference type="GO" id="GO:0000287">
    <property type="term" value="F:magnesium ion binding"/>
    <property type="evidence" value="ECO:0007669"/>
    <property type="project" value="UniProtKB-UniRule"/>
</dbReference>
<dbReference type="GO" id="GO:0009228">
    <property type="term" value="P:thiamine biosynthetic process"/>
    <property type="evidence" value="ECO:0007669"/>
    <property type="project" value="UniProtKB-KW"/>
</dbReference>
<dbReference type="GO" id="GO:0009229">
    <property type="term" value="P:thiamine diphosphate biosynthetic process"/>
    <property type="evidence" value="ECO:0007669"/>
    <property type="project" value="UniProtKB-UniRule"/>
</dbReference>
<dbReference type="CDD" id="cd01170">
    <property type="entry name" value="THZ_kinase"/>
    <property type="match status" value="1"/>
</dbReference>
<dbReference type="Gene3D" id="3.40.1190.20">
    <property type="match status" value="1"/>
</dbReference>
<dbReference type="HAMAP" id="MF_00228">
    <property type="entry name" value="Thz_kinase"/>
    <property type="match status" value="1"/>
</dbReference>
<dbReference type="InterPro" id="IPR000417">
    <property type="entry name" value="Hyethyz_kinase"/>
</dbReference>
<dbReference type="InterPro" id="IPR029056">
    <property type="entry name" value="Ribokinase-like"/>
</dbReference>
<dbReference type="NCBIfam" id="NF006830">
    <property type="entry name" value="PRK09355.1"/>
    <property type="match status" value="1"/>
</dbReference>
<dbReference type="Pfam" id="PF02110">
    <property type="entry name" value="HK"/>
    <property type="match status" value="1"/>
</dbReference>
<dbReference type="PIRSF" id="PIRSF000513">
    <property type="entry name" value="Thz_kinase"/>
    <property type="match status" value="1"/>
</dbReference>
<dbReference type="PRINTS" id="PR01099">
    <property type="entry name" value="HYETHTZKNASE"/>
</dbReference>
<dbReference type="SUPFAM" id="SSF53613">
    <property type="entry name" value="Ribokinase-like"/>
    <property type="match status" value="1"/>
</dbReference>
<comment type="function">
    <text evidence="1">Catalyzes the phosphorylation of the hydroxyl group of 4-methyl-5-beta-hydroxyethylthiazole (THZ).</text>
</comment>
<comment type="catalytic activity">
    <reaction evidence="1">
        <text>5-(2-hydroxyethyl)-4-methylthiazole + ATP = 4-methyl-5-(2-phosphooxyethyl)-thiazole + ADP + H(+)</text>
        <dbReference type="Rhea" id="RHEA:24212"/>
        <dbReference type="ChEBI" id="CHEBI:15378"/>
        <dbReference type="ChEBI" id="CHEBI:17957"/>
        <dbReference type="ChEBI" id="CHEBI:30616"/>
        <dbReference type="ChEBI" id="CHEBI:58296"/>
        <dbReference type="ChEBI" id="CHEBI:456216"/>
        <dbReference type="EC" id="2.7.1.50"/>
    </reaction>
</comment>
<comment type="cofactor">
    <cofactor evidence="1">
        <name>Mg(2+)</name>
        <dbReference type="ChEBI" id="CHEBI:18420"/>
    </cofactor>
</comment>
<comment type="pathway">
    <text evidence="1">Cofactor biosynthesis; thiamine diphosphate biosynthesis; 4-methyl-5-(2-phosphoethyl)-thiazole from 5-(2-hydroxyethyl)-4-methylthiazole: step 1/1.</text>
</comment>
<comment type="similarity">
    <text evidence="1">Belongs to the Thz kinase family.</text>
</comment>
<gene>
    <name evidence="1" type="primary">thiM2</name>
    <name type="ordered locus">CLJ_B2463</name>
</gene>
<sequence length="265" mass="28528">MQIRQSVKLKKPLIHYITNPISINDCANMILAAGAKPIMAEHPLEVSEITSVSKSLGVNLGNITDNKMKSMLISGKTAYENKIPQVIDLVGVGCSKLRLDYARKFISECHPNVIKGNMSEIKAIYGIKSSAKGIDVGACDIITEQNFDENIKMIKRLSMETGSVVAATGVVDIISNGTHTYIISNGCEVLSMITGTGCMLTGIIASYISSGNILEGTALAIVLMGICGELSQHVKGTGSFRNELIDNIFSISDDIIIKKIRINSY</sequence>
<reference key="1">
    <citation type="submission" date="2008-05" db="EMBL/GenBank/DDBJ databases">
        <title>Genome sequence of Clostridium botulinum Ba4 strain 657.</title>
        <authorList>
            <person name="Shrivastava S."/>
            <person name="Brown J.L."/>
            <person name="Bruce D."/>
            <person name="Detter C."/>
            <person name="Munk C."/>
            <person name="Smith L.A."/>
            <person name="Smith T.J."/>
            <person name="Sutton G."/>
            <person name="Brettin T.S."/>
        </authorList>
    </citation>
    <scope>NUCLEOTIDE SEQUENCE [LARGE SCALE GENOMIC DNA]</scope>
    <source>
        <strain>657 / Type Ba4</strain>
    </source>
</reference>
<feature type="chain" id="PRO_0000383840" description="Hydroxyethylthiazole kinase 2">
    <location>
        <begin position="1"/>
        <end position="265"/>
    </location>
</feature>
<feature type="binding site" evidence="1">
    <location>
        <position position="39"/>
    </location>
    <ligand>
        <name>substrate</name>
    </ligand>
</feature>
<feature type="binding site" evidence="1">
    <location>
        <position position="115"/>
    </location>
    <ligand>
        <name>ATP</name>
        <dbReference type="ChEBI" id="CHEBI:30616"/>
    </ligand>
</feature>
<feature type="binding site" evidence="1">
    <location>
        <position position="168"/>
    </location>
    <ligand>
        <name>ATP</name>
        <dbReference type="ChEBI" id="CHEBI:30616"/>
    </ligand>
</feature>
<feature type="binding site" evidence="1">
    <location>
        <position position="195"/>
    </location>
    <ligand>
        <name>substrate</name>
    </ligand>
</feature>
<evidence type="ECO:0000255" key="1">
    <source>
        <dbReference type="HAMAP-Rule" id="MF_00228"/>
    </source>
</evidence>
<proteinExistence type="inferred from homology"/>
<protein>
    <recommendedName>
        <fullName evidence="1">Hydroxyethylthiazole kinase 2</fullName>
        <ecNumber evidence="1">2.7.1.50</ecNumber>
    </recommendedName>
    <alternativeName>
        <fullName evidence="1">4-methyl-5-beta-hydroxyethylthiazole kinase 2</fullName>
        <shortName evidence="1">TH kinase 2</shortName>
        <shortName evidence="1">Thz kinase 2</shortName>
    </alternativeName>
</protein>